<dbReference type="EMBL" id="AE004439">
    <property type="protein sequence ID" value="AAK04042.1"/>
    <property type="molecule type" value="Genomic_DNA"/>
</dbReference>
<dbReference type="RefSeq" id="WP_010907423.1">
    <property type="nucleotide sequence ID" value="NC_002663.1"/>
</dbReference>
<dbReference type="SMR" id="Q9CJN9"/>
<dbReference type="STRING" id="272843.PM1958"/>
<dbReference type="EnsemblBacteria" id="AAK04042">
    <property type="protein sequence ID" value="AAK04042"/>
    <property type="gene ID" value="PM1958"/>
</dbReference>
<dbReference type="KEGG" id="pmu:PM1958"/>
<dbReference type="PATRIC" id="fig|272843.6.peg.1982"/>
<dbReference type="HOGENOM" id="CLU_105087_3_0_6"/>
<dbReference type="OrthoDB" id="5676645at2"/>
<dbReference type="Proteomes" id="UP000000809">
    <property type="component" value="Chromosome"/>
</dbReference>
<dbReference type="Gene3D" id="2.30.110.10">
    <property type="entry name" value="Electron Transport, Fmn-binding Protein, Chain A"/>
    <property type="match status" value="1"/>
</dbReference>
<dbReference type="HAMAP" id="MF_00764">
    <property type="entry name" value="UPF0306"/>
    <property type="match status" value="1"/>
</dbReference>
<dbReference type="InterPro" id="IPR011576">
    <property type="entry name" value="Pyridox_Oxase_N"/>
</dbReference>
<dbReference type="InterPro" id="IPR012349">
    <property type="entry name" value="Split_barrel_FMN-bd"/>
</dbReference>
<dbReference type="InterPro" id="IPR011194">
    <property type="entry name" value="UPF0306"/>
</dbReference>
<dbReference type="Pfam" id="PF01243">
    <property type="entry name" value="PNPOx_N"/>
    <property type="match status" value="1"/>
</dbReference>
<dbReference type="PIRSF" id="PIRSF009554">
    <property type="entry name" value="UCP009554"/>
    <property type="match status" value="1"/>
</dbReference>
<dbReference type="SUPFAM" id="SSF50475">
    <property type="entry name" value="FMN-binding split barrel"/>
    <property type="match status" value="1"/>
</dbReference>
<protein>
    <recommendedName>
        <fullName evidence="1">UPF0306 protein PM1958</fullName>
    </recommendedName>
</protein>
<organism>
    <name type="scientific">Pasteurella multocida (strain Pm70)</name>
    <dbReference type="NCBI Taxonomy" id="272843"/>
    <lineage>
        <taxon>Bacteria</taxon>
        <taxon>Pseudomonadati</taxon>
        <taxon>Pseudomonadota</taxon>
        <taxon>Gammaproteobacteria</taxon>
        <taxon>Pasteurellales</taxon>
        <taxon>Pasteurellaceae</taxon>
        <taxon>Pasteurella</taxon>
    </lineage>
</organism>
<reference key="1">
    <citation type="journal article" date="2001" name="Proc. Natl. Acad. Sci. U.S.A.">
        <title>Complete genomic sequence of Pasteurella multocida Pm70.</title>
        <authorList>
            <person name="May B.J."/>
            <person name="Zhang Q."/>
            <person name="Li L.L."/>
            <person name="Paustian M.L."/>
            <person name="Whittam T.S."/>
            <person name="Kapur V."/>
        </authorList>
    </citation>
    <scope>NUCLEOTIDE SEQUENCE [LARGE SCALE GENOMIC DNA]</scope>
    <source>
        <strain>Pm70</strain>
    </source>
</reference>
<accession>Q9CJN9</accession>
<sequence length="149" mass="17435">MHKRVVDFIKKQYLFTLACTENNLPWANAFYYVFDEKENRLIYITGDQTHHAKVLRNNSRVAGTIFVPTKFVPSLQGVQFTGRSSQLFSTQAEQARALYKTEYSHHLIDQLTVWQVELEYVRLVDNSLGLFSTIEWRKGQVVEETDHYA</sequence>
<comment type="similarity">
    <text evidence="1">Belongs to the UPF0306 family.</text>
</comment>
<feature type="chain" id="PRO_0000214870" description="UPF0306 protein PM1958">
    <location>
        <begin position="1"/>
        <end position="149"/>
    </location>
</feature>
<proteinExistence type="inferred from homology"/>
<evidence type="ECO:0000255" key="1">
    <source>
        <dbReference type="HAMAP-Rule" id="MF_00764"/>
    </source>
</evidence>
<gene>
    <name type="ordered locus">PM1958</name>
</gene>
<keyword id="KW-1185">Reference proteome</keyword>
<name>Y1958_PASMU</name>